<name>COX1_RHEAM</name>
<feature type="chain" id="PRO_0000183407" description="Cytochrome c oxidase subunit 1">
    <location>
        <begin position="1"/>
        <end position="337" status="greater than"/>
    </location>
</feature>
<feature type="topological domain" description="Mitochondrial matrix" evidence="2">
    <location>
        <begin position="1"/>
        <end position="12"/>
    </location>
</feature>
<feature type="transmembrane region" description="Helical; Name=I" evidence="2">
    <location>
        <begin position="13"/>
        <end position="41"/>
    </location>
</feature>
<feature type="topological domain" description="Mitochondrial intermembrane" evidence="2">
    <location>
        <begin position="42"/>
        <end position="51"/>
    </location>
</feature>
<feature type="transmembrane region" description="Helical; Name=II" evidence="2">
    <location>
        <begin position="52"/>
        <end position="87"/>
    </location>
</feature>
<feature type="topological domain" description="Mitochondrial matrix" evidence="2">
    <location>
        <begin position="88"/>
        <end position="95"/>
    </location>
</feature>
<feature type="transmembrane region" description="Helical; Name=III" evidence="2">
    <location>
        <begin position="96"/>
        <end position="118"/>
    </location>
</feature>
<feature type="topological domain" description="Mitochondrial intermembrane" evidence="2">
    <location>
        <begin position="119"/>
        <end position="141"/>
    </location>
</feature>
<feature type="transmembrane region" description="Helical; Name=IV" evidence="2">
    <location>
        <begin position="142"/>
        <end position="171"/>
    </location>
</feature>
<feature type="topological domain" description="Mitochondrial matrix" evidence="2">
    <location>
        <begin position="172"/>
        <end position="183"/>
    </location>
</feature>
<feature type="transmembrane region" description="Helical; Name=V" evidence="2">
    <location>
        <begin position="184"/>
        <end position="213"/>
    </location>
</feature>
<feature type="topological domain" description="Mitochondrial intermembrane" evidence="2">
    <location>
        <begin position="214"/>
        <end position="228"/>
    </location>
</feature>
<feature type="transmembrane region" description="Helical; Name=VI" evidence="2">
    <location>
        <begin position="229"/>
        <end position="262"/>
    </location>
</feature>
<feature type="topological domain" description="Mitochondrial matrix" evidence="2">
    <location>
        <begin position="263"/>
        <end position="270"/>
    </location>
</feature>
<feature type="transmembrane region" description="Helical; Name=VII" evidence="2">
    <location>
        <begin position="271"/>
        <end position="287"/>
    </location>
</feature>
<feature type="topological domain" description="Mitochondrial intermembrane" evidence="2">
    <location>
        <begin position="288"/>
        <end position="299"/>
    </location>
</feature>
<feature type="transmembrane region" description="Helical; Name=VIII" evidence="2">
    <location>
        <begin position="300"/>
        <end position="328"/>
    </location>
</feature>
<feature type="topological domain" description="Mitochondrial matrix" evidence="2">
    <location>
        <begin position="329"/>
        <end position="337" status="greater than"/>
    </location>
</feature>
<feature type="binding site" evidence="2">
    <location>
        <position position="41"/>
    </location>
    <ligand>
        <name>Na(+)</name>
        <dbReference type="ChEBI" id="CHEBI:29101"/>
    </ligand>
</feature>
<feature type="binding site" evidence="2">
    <location>
        <position position="46"/>
    </location>
    <ligand>
        <name>Na(+)</name>
        <dbReference type="ChEBI" id="CHEBI:29101"/>
    </ligand>
</feature>
<feature type="binding site" description="axial binding residue" evidence="2">
    <location>
        <position position="62"/>
    </location>
    <ligand>
        <name>Fe(II)-heme a</name>
        <dbReference type="ChEBI" id="CHEBI:61715"/>
        <note>low-spin</note>
    </ligand>
    <ligandPart>
        <name>Fe</name>
        <dbReference type="ChEBI" id="CHEBI:18248"/>
    </ligandPart>
</feature>
<feature type="binding site" evidence="2">
    <location>
        <position position="241"/>
    </location>
    <ligand>
        <name>Cu cation</name>
        <dbReference type="ChEBI" id="CHEBI:23378"/>
        <label>B</label>
    </ligand>
</feature>
<feature type="binding site" evidence="2">
    <location>
        <position position="245"/>
    </location>
    <ligand>
        <name>O2</name>
        <dbReference type="ChEBI" id="CHEBI:15379"/>
    </ligand>
</feature>
<feature type="binding site" evidence="2">
    <location>
        <position position="291"/>
    </location>
    <ligand>
        <name>Cu cation</name>
        <dbReference type="ChEBI" id="CHEBI:23378"/>
        <label>B</label>
    </ligand>
</feature>
<feature type="binding site" evidence="2">
    <location>
        <position position="292"/>
    </location>
    <ligand>
        <name>Cu cation</name>
        <dbReference type="ChEBI" id="CHEBI:23378"/>
        <label>B</label>
    </ligand>
</feature>
<feature type="cross-link" description="1'-histidyl-3'-tyrosine (His-Tyr)" evidence="2">
    <location>
        <begin position="241"/>
        <end position="245"/>
    </location>
</feature>
<feature type="non-terminal residue">
    <location>
        <position position="337"/>
    </location>
</feature>
<comment type="function">
    <text evidence="3">Component of the cytochrome c oxidase, the last enzyme in the mitochondrial electron transport chain which drives oxidative phosphorylation. The respiratory chain contains 3 multisubunit complexes succinate dehydrogenase (complex II, CII), ubiquinol-cytochrome c oxidoreductase (cytochrome b-c1 complex, complex III, CIII) and cytochrome c oxidase (complex IV, CIV), that cooperate to transfer electrons derived from NADH and succinate to molecular oxygen, creating an electrochemical gradient over the inner membrane that drives transmembrane transport and the ATP synthase. Cytochrome c oxidase is the component of the respiratory chain that catalyzes the reduction of oxygen to water. Electrons originating from reduced cytochrome c in the intermembrane space (IMS) are transferred via the dinuclear copper A center (CU(A)) of subunit 2 and heme A of subunit 1 to the active site in subunit 1, a binuclear center (BNC) formed by heme A3 and copper B (CU(B)). The BNC reduces molecular oxygen to 2 water molecules using 4 electrons from cytochrome c in the IMS and 4 protons from the mitochondrial matrix.</text>
</comment>
<comment type="catalytic activity">
    <reaction evidence="3">
        <text>4 Fe(II)-[cytochrome c] + O2 + 8 H(+)(in) = 4 Fe(III)-[cytochrome c] + 2 H2O + 4 H(+)(out)</text>
        <dbReference type="Rhea" id="RHEA:11436"/>
        <dbReference type="Rhea" id="RHEA-COMP:10350"/>
        <dbReference type="Rhea" id="RHEA-COMP:14399"/>
        <dbReference type="ChEBI" id="CHEBI:15377"/>
        <dbReference type="ChEBI" id="CHEBI:15378"/>
        <dbReference type="ChEBI" id="CHEBI:15379"/>
        <dbReference type="ChEBI" id="CHEBI:29033"/>
        <dbReference type="ChEBI" id="CHEBI:29034"/>
        <dbReference type="EC" id="7.1.1.9"/>
    </reaction>
    <physiologicalReaction direction="left-to-right" evidence="3">
        <dbReference type="Rhea" id="RHEA:11437"/>
    </physiologicalReaction>
</comment>
<comment type="cofactor">
    <cofactor evidence="2">
        <name>heme</name>
        <dbReference type="ChEBI" id="CHEBI:30413"/>
    </cofactor>
    <text evidence="2">Binds 2 heme A groups non-covalently per subunit.</text>
</comment>
<comment type="cofactor">
    <cofactor evidence="2">
        <name>Cu cation</name>
        <dbReference type="ChEBI" id="CHEBI:23378"/>
    </cofactor>
    <text evidence="2">Binds a copper B center.</text>
</comment>
<comment type="pathway">
    <text evidence="3">Energy metabolism; oxidative phosphorylation.</text>
</comment>
<comment type="subunit">
    <text evidence="1 2">Component of the cytochrome c oxidase (complex IV, CIV), a multisubunit enzyme composed of 14 subunits. The complex is composed of a catalytic core of 3 subunits MT-CO1, MT-CO2 and MT-CO3, encoded in the mitochondrial DNA, and 11 supernumerary subunits COX4I, COX5A, COX5B, COX6A, COX6B, COX6C, COX7A, COX7B, COX7C, COX8 and NDUFA4, which are encoded in the nuclear genome. The complex exists as a monomer or a dimer and forms supercomplexes (SCs) in the inner mitochondrial membrane with NADH-ubiquinone oxidoreductase (complex I, CI) and ubiquinol-cytochrome c oxidoreductase (cytochrome b-c1 complex, complex III, CIII), resulting in different assemblies (supercomplex SCI(1)III(2)IV(1) and megacomplex MCI(2)III(2)IV(2)) (By similarity). As a newly synthesized protein, rapidly incorporates into a multi-subunit assembly intermediate in the inner membrane, called MITRAC (mitochondrial translation regulation assembly intermediate of cytochrome c oxidase) complex, whose core components are COA3/MITRAC12 and COX14. Within the MITRAC complex, interacts with COA3 and with SMIM20/MITRAC7; the interaction with SMIM20 stabilizes the newly synthesized MT-CO1 and prevents its premature turnover. Interacts with TMEM177 in a COX20-dependent manner (By similarity).</text>
</comment>
<comment type="subcellular location">
    <subcellularLocation>
        <location evidence="2">Mitochondrion inner membrane</location>
        <topology evidence="2">Multi-pass membrane protein</topology>
    </subcellularLocation>
</comment>
<comment type="similarity">
    <text evidence="4">Belongs to the heme-copper respiratory oxidase family.</text>
</comment>
<evidence type="ECO:0000250" key="1">
    <source>
        <dbReference type="UniProtKB" id="P00395"/>
    </source>
</evidence>
<evidence type="ECO:0000250" key="2">
    <source>
        <dbReference type="UniProtKB" id="P00396"/>
    </source>
</evidence>
<evidence type="ECO:0000250" key="3">
    <source>
        <dbReference type="UniProtKB" id="P00401"/>
    </source>
</evidence>
<evidence type="ECO:0000305" key="4"/>
<sequence length="337" mass="36792">MTFITRWLFSTNHKDIGTLYLIFGAWAGMVGTALSLLIRAELGQPGTLLGDDQIYNVIVTAHAFVMIFFMVMPVMIGGFGNWLVPLMIGAPDMAFPRMNNMSFWLLPPSFLLLLASSTIEAGAGTGWTVYPPLAGNLAHAGASVDLPIFSLHLAGVSSILGAINFITTAINMKPPALSQYQTPLFVWSVLITAILLLLSLPVLAAGITMLLTDRNLNTTFFDPAGGGDPVLYQHLFWFFGHPEVYILILPGFGMISHVVTYYAGKKEPFGYMGMVWAMLSIGFLGFIVWAHHMFTVGMDVDTRAYFTSATMIIAIPTGIKVFSWLATLHGGTIKWDP</sequence>
<protein>
    <recommendedName>
        <fullName>Cytochrome c oxidase subunit 1</fullName>
        <ecNumber>7.1.1.9</ecNumber>
    </recommendedName>
    <alternativeName>
        <fullName>Cytochrome c oxidase polypeptide I</fullName>
    </alternativeName>
</protein>
<accession>O03546</accession>
<reference key="1">
    <citation type="book" date="1997" name="Avian molecular evolution and systematics">
        <title>Phylogenetic relationships of the ratite birds: resolving conflicts between molecular and morphological data sets.</title>
        <editorList>
            <person name="Mindell D.P."/>
        </editorList>
        <authorList>
            <person name="Lee K."/>
            <person name="Feinstein J."/>
            <person name="Cracraft J."/>
        </authorList>
    </citation>
    <scope>NUCLEOTIDE SEQUENCE [GENOMIC DNA]</scope>
</reference>
<keyword id="KW-0106">Calcium</keyword>
<keyword id="KW-0186">Copper</keyword>
<keyword id="KW-0249">Electron transport</keyword>
<keyword id="KW-0349">Heme</keyword>
<keyword id="KW-0408">Iron</keyword>
<keyword id="KW-0472">Membrane</keyword>
<keyword id="KW-0479">Metal-binding</keyword>
<keyword id="KW-0496">Mitochondrion</keyword>
<keyword id="KW-0999">Mitochondrion inner membrane</keyword>
<keyword id="KW-0679">Respiratory chain</keyword>
<keyword id="KW-0915">Sodium</keyword>
<keyword id="KW-1278">Translocase</keyword>
<keyword id="KW-0812">Transmembrane</keyword>
<keyword id="KW-1133">Transmembrane helix</keyword>
<keyword id="KW-0813">Transport</keyword>
<gene>
    <name type="primary">MT-CO1</name>
    <name type="synonym">COI</name>
    <name type="synonym">COXI</name>
    <name type="synonym">MTCO1</name>
</gene>
<organism>
    <name type="scientific">Rhea americana</name>
    <name type="common">Greater rhea</name>
    <name type="synonym">Common rhea</name>
    <dbReference type="NCBI Taxonomy" id="8797"/>
    <lineage>
        <taxon>Eukaryota</taxon>
        <taxon>Metazoa</taxon>
        <taxon>Chordata</taxon>
        <taxon>Craniata</taxon>
        <taxon>Vertebrata</taxon>
        <taxon>Euteleostomi</taxon>
        <taxon>Archelosauria</taxon>
        <taxon>Archosauria</taxon>
        <taxon>Dinosauria</taxon>
        <taxon>Saurischia</taxon>
        <taxon>Theropoda</taxon>
        <taxon>Coelurosauria</taxon>
        <taxon>Aves</taxon>
        <taxon>Palaeognathae</taxon>
        <taxon>Rheiformes</taxon>
        <taxon>Rheidae</taxon>
        <taxon>Rhea</taxon>
    </lineage>
</organism>
<geneLocation type="mitochondrion"/>
<dbReference type="EC" id="7.1.1.9"/>
<dbReference type="EMBL" id="U76061">
    <property type="protein sequence ID" value="AAB61325.1"/>
    <property type="molecule type" value="Genomic_DNA"/>
</dbReference>
<dbReference type="SMR" id="O03546"/>
<dbReference type="UniPathway" id="UPA00705"/>
<dbReference type="GO" id="GO:0005743">
    <property type="term" value="C:mitochondrial inner membrane"/>
    <property type="evidence" value="ECO:0007669"/>
    <property type="project" value="UniProtKB-SubCell"/>
</dbReference>
<dbReference type="GO" id="GO:0045277">
    <property type="term" value="C:respiratory chain complex IV"/>
    <property type="evidence" value="ECO:0000250"/>
    <property type="project" value="UniProtKB"/>
</dbReference>
<dbReference type="GO" id="GO:0004129">
    <property type="term" value="F:cytochrome-c oxidase activity"/>
    <property type="evidence" value="ECO:0007669"/>
    <property type="project" value="UniProtKB-EC"/>
</dbReference>
<dbReference type="GO" id="GO:0020037">
    <property type="term" value="F:heme binding"/>
    <property type="evidence" value="ECO:0007669"/>
    <property type="project" value="InterPro"/>
</dbReference>
<dbReference type="GO" id="GO:0046872">
    <property type="term" value="F:metal ion binding"/>
    <property type="evidence" value="ECO:0007669"/>
    <property type="project" value="UniProtKB-KW"/>
</dbReference>
<dbReference type="GO" id="GO:0015990">
    <property type="term" value="P:electron transport coupled proton transport"/>
    <property type="evidence" value="ECO:0007669"/>
    <property type="project" value="TreeGrafter"/>
</dbReference>
<dbReference type="GO" id="GO:0006123">
    <property type="term" value="P:mitochondrial electron transport, cytochrome c to oxygen"/>
    <property type="evidence" value="ECO:0007669"/>
    <property type="project" value="TreeGrafter"/>
</dbReference>
<dbReference type="FunFam" id="1.20.210.10:FF:000013">
    <property type="entry name" value="Cytochrome c oxidase subunit 1"/>
    <property type="match status" value="1"/>
</dbReference>
<dbReference type="Gene3D" id="1.20.210.10">
    <property type="entry name" value="Cytochrome c oxidase-like, subunit I domain"/>
    <property type="match status" value="1"/>
</dbReference>
<dbReference type="InterPro" id="IPR023616">
    <property type="entry name" value="Cyt_c_oxase-like_su1_dom"/>
</dbReference>
<dbReference type="InterPro" id="IPR036927">
    <property type="entry name" value="Cyt_c_oxase-like_su1_sf"/>
</dbReference>
<dbReference type="InterPro" id="IPR000883">
    <property type="entry name" value="Cyt_C_Oxase_1"/>
</dbReference>
<dbReference type="InterPro" id="IPR023615">
    <property type="entry name" value="Cyt_c_Oxase_su1_BS"/>
</dbReference>
<dbReference type="PANTHER" id="PTHR10422">
    <property type="entry name" value="CYTOCHROME C OXIDASE SUBUNIT 1"/>
    <property type="match status" value="1"/>
</dbReference>
<dbReference type="PANTHER" id="PTHR10422:SF18">
    <property type="entry name" value="CYTOCHROME C OXIDASE SUBUNIT 1"/>
    <property type="match status" value="1"/>
</dbReference>
<dbReference type="Pfam" id="PF00115">
    <property type="entry name" value="COX1"/>
    <property type="match status" value="1"/>
</dbReference>
<dbReference type="PRINTS" id="PR01165">
    <property type="entry name" value="CYCOXIDASEI"/>
</dbReference>
<dbReference type="SUPFAM" id="SSF81442">
    <property type="entry name" value="Cytochrome c oxidase subunit I-like"/>
    <property type="match status" value="1"/>
</dbReference>
<dbReference type="PROSITE" id="PS50855">
    <property type="entry name" value="COX1"/>
    <property type="match status" value="1"/>
</dbReference>
<dbReference type="PROSITE" id="PS00077">
    <property type="entry name" value="COX1_CUB"/>
    <property type="match status" value="1"/>
</dbReference>
<proteinExistence type="inferred from homology"/>